<sequence length="501" mass="57742">MRSDAIKRRLYSKAIFIIPFWILSIALWFSSGSVYKIDSCMIDNNKTTCIPYTISKYTDFNSNSQLNQFNSSFILFQIIPINILCFLPLLGYMYILASVLKVDLVKKAFTIFGIMMLITIPLFLIVSICIFPLNLRETLCSDLKNGFIKSNIVDKGNTTICNLKESFNYFKGSFSDTTTTTTTTTTLEWGITYNWYFIIATIVFSFSMLVIVLVLLIKDANTLNNGDGQNYSLFEQENDENFEDDDPNDVIESGLDLWGRNIWYNYTKKPMNSILLSIFQLFYIGSYFSLYYFGFKFNLIPFFINLIILFISYYNLIFDGIRDNYLIKRMYRERSNDVNQFIERVKKIKPKVAIVKKPNKEGGKSSSGGGGGGGGGIDDGIEAILEPRLLKSWLDQSELDYLMINDDDDKYKPIVELTIIEDFKTTSQLPIDAISLLFVKTDLSNYYIITNKKKRFIQINRGLHSFLVLIGLSGLFNILYLKRLILKKSITIKTLFEYNNR</sequence>
<feature type="chain" id="PRO_0000346883" description="Putative uncharacterized transmembrane protein DDB_G0291480">
    <location>
        <begin position="1"/>
        <end position="501"/>
    </location>
</feature>
<feature type="transmembrane region" description="Helical" evidence="1">
    <location>
        <begin position="14"/>
        <end position="34"/>
    </location>
</feature>
<feature type="transmembrane region" description="Helical" evidence="1">
    <location>
        <begin position="73"/>
        <end position="93"/>
    </location>
</feature>
<feature type="transmembrane region" description="Helical" evidence="1">
    <location>
        <begin position="111"/>
        <end position="131"/>
    </location>
</feature>
<feature type="transmembrane region" description="Helical" evidence="1">
    <location>
        <begin position="197"/>
        <end position="217"/>
    </location>
</feature>
<feature type="transmembrane region" description="Helical" evidence="1">
    <location>
        <begin position="274"/>
        <end position="294"/>
    </location>
</feature>
<feature type="transmembrane region" description="Helical" evidence="1">
    <location>
        <begin position="297"/>
        <end position="317"/>
    </location>
</feature>
<feature type="transmembrane region" description="Helical" evidence="1">
    <location>
        <begin position="466"/>
        <end position="486"/>
    </location>
</feature>
<gene>
    <name type="ORF">DDB_G0291480</name>
</gene>
<proteinExistence type="predicted"/>
<dbReference type="EMBL" id="AAFI02000177">
    <property type="protein sequence ID" value="EAL61724.1"/>
    <property type="molecule type" value="Genomic_DNA"/>
</dbReference>
<dbReference type="RefSeq" id="XP_635244.1">
    <property type="nucleotide sequence ID" value="XM_630152.1"/>
</dbReference>
<dbReference type="SMR" id="Q54EJ6"/>
<dbReference type="FunCoup" id="Q54EJ6">
    <property type="interactions" value="877"/>
</dbReference>
<dbReference type="PaxDb" id="44689-DDB0183923"/>
<dbReference type="EnsemblProtists" id="EAL61724">
    <property type="protein sequence ID" value="EAL61724"/>
    <property type="gene ID" value="DDB_G0291480"/>
</dbReference>
<dbReference type="GeneID" id="8628190"/>
<dbReference type="KEGG" id="ddi:DDB_G0291480"/>
<dbReference type="dictyBase" id="DDB_G0291480"/>
<dbReference type="VEuPathDB" id="AmoebaDB:DDB_G0291480"/>
<dbReference type="eggNOG" id="ENOG502RA31">
    <property type="taxonomic scope" value="Eukaryota"/>
</dbReference>
<dbReference type="HOGENOM" id="CLU_544491_0_0_1"/>
<dbReference type="InParanoid" id="Q54EJ6"/>
<dbReference type="OMA" id="YLMINDD"/>
<dbReference type="PRO" id="PR:Q54EJ6"/>
<dbReference type="Proteomes" id="UP000002195">
    <property type="component" value="Chromosome 6"/>
</dbReference>
<dbReference type="GO" id="GO:0016020">
    <property type="term" value="C:membrane"/>
    <property type="evidence" value="ECO:0007669"/>
    <property type="project" value="UniProtKB-SubCell"/>
</dbReference>
<name>Y3923_DICDI</name>
<keyword id="KW-0472">Membrane</keyword>
<keyword id="KW-1185">Reference proteome</keyword>
<keyword id="KW-0812">Transmembrane</keyword>
<keyword id="KW-1133">Transmembrane helix</keyword>
<accession>Q54EJ6</accession>
<reference key="1">
    <citation type="journal article" date="2005" name="Nature">
        <title>The genome of the social amoeba Dictyostelium discoideum.</title>
        <authorList>
            <person name="Eichinger L."/>
            <person name="Pachebat J.A."/>
            <person name="Gloeckner G."/>
            <person name="Rajandream M.A."/>
            <person name="Sucgang R."/>
            <person name="Berriman M."/>
            <person name="Song J."/>
            <person name="Olsen R."/>
            <person name="Szafranski K."/>
            <person name="Xu Q."/>
            <person name="Tunggal B."/>
            <person name="Kummerfeld S."/>
            <person name="Madera M."/>
            <person name="Konfortov B.A."/>
            <person name="Rivero F."/>
            <person name="Bankier A.T."/>
            <person name="Lehmann R."/>
            <person name="Hamlin N."/>
            <person name="Davies R."/>
            <person name="Gaudet P."/>
            <person name="Fey P."/>
            <person name="Pilcher K."/>
            <person name="Chen G."/>
            <person name="Saunders D."/>
            <person name="Sodergren E.J."/>
            <person name="Davis P."/>
            <person name="Kerhornou A."/>
            <person name="Nie X."/>
            <person name="Hall N."/>
            <person name="Anjard C."/>
            <person name="Hemphill L."/>
            <person name="Bason N."/>
            <person name="Farbrother P."/>
            <person name="Desany B."/>
            <person name="Just E."/>
            <person name="Morio T."/>
            <person name="Rost R."/>
            <person name="Churcher C.M."/>
            <person name="Cooper J."/>
            <person name="Haydock S."/>
            <person name="van Driessche N."/>
            <person name="Cronin A."/>
            <person name="Goodhead I."/>
            <person name="Muzny D.M."/>
            <person name="Mourier T."/>
            <person name="Pain A."/>
            <person name="Lu M."/>
            <person name="Harper D."/>
            <person name="Lindsay R."/>
            <person name="Hauser H."/>
            <person name="James K.D."/>
            <person name="Quiles M."/>
            <person name="Madan Babu M."/>
            <person name="Saito T."/>
            <person name="Buchrieser C."/>
            <person name="Wardroper A."/>
            <person name="Felder M."/>
            <person name="Thangavelu M."/>
            <person name="Johnson D."/>
            <person name="Knights A."/>
            <person name="Loulseged H."/>
            <person name="Mungall K.L."/>
            <person name="Oliver K."/>
            <person name="Price C."/>
            <person name="Quail M.A."/>
            <person name="Urushihara H."/>
            <person name="Hernandez J."/>
            <person name="Rabbinowitsch E."/>
            <person name="Steffen D."/>
            <person name="Sanders M."/>
            <person name="Ma J."/>
            <person name="Kohara Y."/>
            <person name="Sharp S."/>
            <person name="Simmonds M.N."/>
            <person name="Spiegler S."/>
            <person name="Tivey A."/>
            <person name="Sugano S."/>
            <person name="White B."/>
            <person name="Walker D."/>
            <person name="Woodward J.R."/>
            <person name="Winckler T."/>
            <person name="Tanaka Y."/>
            <person name="Shaulsky G."/>
            <person name="Schleicher M."/>
            <person name="Weinstock G.M."/>
            <person name="Rosenthal A."/>
            <person name="Cox E.C."/>
            <person name="Chisholm R.L."/>
            <person name="Gibbs R.A."/>
            <person name="Loomis W.F."/>
            <person name="Platzer M."/>
            <person name="Kay R.R."/>
            <person name="Williams J.G."/>
            <person name="Dear P.H."/>
            <person name="Noegel A.A."/>
            <person name="Barrell B.G."/>
            <person name="Kuspa A."/>
        </authorList>
    </citation>
    <scope>NUCLEOTIDE SEQUENCE [LARGE SCALE GENOMIC DNA]</scope>
    <source>
        <strain>AX4</strain>
    </source>
</reference>
<protein>
    <recommendedName>
        <fullName>Putative uncharacterized transmembrane protein DDB_G0291480</fullName>
    </recommendedName>
</protein>
<organism>
    <name type="scientific">Dictyostelium discoideum</name>
    <name type="common">Social amoeba</name>
    <dbReference type="NCBI Taxonomy" id="44689"/>
    <lineage>
        <taxon>Eukaryota</taxon>
        <taxon>Amoebozoa</taxon>
        <taxon>Evosea</taxon>
        <taxon>Eumycetozoa</taxon>
        <taxon>Dictyostelia</taxon>
        <taxon>Dictyosteliales</taxon>
        <taxon>Dictyosteliaceae</taxon>
        <taxon>Dictyostelium</taxon>
    </lineage>
</organism>
<comment type="subcellular location">
    <subcellularLocation>
        <location evidence="2">Membrane</location>
        <topology evidence="2">Multi-pass membrane protein</topology>
    </subcellularLocation>
</comment>
<evidence type="ECO:0000255" key="1"/>
<evidence type="ECO:0000305" key="2"/>